<comment type="subunit">
    <text evidence="1">Part of the 50S ribosomal subunit.</text>
</comment>
<comment type="similarity">
    <text evidence="1">Belongs to the universal ribosomal protein uL30 family.</text>
</comment>
<reference key="1">
    <citation type="journal article" date="2004" name="Nat. Biotechnol.">
        <title>Complete sequence and comparative genome analysis of the dairy bacterium Streptococcus thermophilus.</title>
        <authorList>
            <person name="Bolotin A."/>
            <person name="Quinquis B."/>
            <person name="Renault P."/>
            <person name="Sorokin A."/>
            <person name="Ehrlich S.D."/>
            <person name="Kulakauskas S."/>
            <person name="Lapidus A."/>
            <person name="Goltsman E."/>
            <person name="Mazur M."/>
            <person name="Pusch G.D."/>
            <person name="Fonstein M."/>
            <person name="Overbeek R."/>
            <person name="Kyprides N."/>
            <person name="Purnelle B."/>
            <person name="Prozzi D."/>
            <person name="Ngui K."/>
            <person name="Masuy D."/>
            <person name="Hancy F."/>
            <person name="Burteau S."/>
            <person name="Boutry M."/>
            <person name="Delcour J."/>
            <person name="Goffeau A."/>
            <person name="Hols P."/>
        </authorList>
    </citation>
    <scope>NUCLEOTIDE SEQUENCE [LARGE SCALE GENOMIC DNA]</scope>
    <source>
        <strain>ATCC BAA-250 / LMG 18311</strain>
    </source>
</reference>
<accession>Q5M2D1</accession>
<protein>
    <recommendedName>
        <fullName evidence="1">Large ribosomal subunit protein uL30</fullName>
    </recommendedName>
    <alternativeName>
        <fullName evidence="2">50S ribosomal protein L30</fullName>
    </alternativeName>
</protein>
<dbReference type="EMBL" id="CP000023">
    <property type="protein sequence ID" value="AAV61514.1"/>
    <property type="molecule type" value="Genomic_DNA"/>
</dbReference>
<dbReference type="RefSeq" id="WP_002946172.1">
    <property type="nucleotide sequence ID" value="NC_006448.1"/>
</dbReference>
<dbReference type="SMR" id="Q5M2D1"/>
<dbReference type="STRING" id="264199.stu1916"/>
<dbReference type="GeneID" id="66899644"/>
<dbReference type="KEGG" id="stl:stu1916"/>
<dbReference type="eggNOG" id="COG1841">
    <property type="taxonomic scope" value="Bacteria"/>
</dbReference>
<dbReference type="HOGENOM" id="CLU_131047_2_1_9"/>
<dbReference type="Proteomes" id="UP000001170">
    <property type="component" value="Chromosome"/>
</dbReference>
<dbReference type="GO" id="GO:0022625">
    <property type="term" value="C:cytosolic large ribosomal subunit"/>
    <property type="evidence" value="ECO:0007669"/>
    <property type="project" value="TreeGrafter"/>
</dbReference>
<dbReference type="GO" id="GO:0003735">
    <property type="term" value="F:structural constituent of ribosome"/>
    <property type="evidence" value="ECO:0007669"/>
    <property type="project" value="InterPro"/>
</dbReference>
<dbReference type="GO" id="GO:0006412">
    <property type="term" value="P:translation"/>
    <property type="evidence" value="ECO:0007669"/>
    <property type="project" value="UniProtKB-UniRule"/>
</dbReference>
<dbReference type="CDD" id="cd01658">
    <property type="entry name" value="Ribosomal_L30"/>
    <property type="match status" value="1"/>
</dbReference>
<dbReference type="FunFam" id="3.30.1390.20:FF:000001">
    <property type="entry name" value="50S ribosomal protein L30"/>
    <property type="match status" value="1"/>
</dbReference>
<dbReference type="Gene3D" id="3.30.1390.20">
    <property type="entry name" value="Ribosomal protein L30, ferredoxin-like fold domain"/>
    <property type="match status" value="1"/>
</dbReference>
<dbReference type="HAMAP" id="MF_01371_B">
    <property type="entry name" value="Ribosomal_uL30_B"/>
    <property type="match status" value="1"/>
</dbReference>
<dbReference type="InterPro" id="IPR036919">
    <property type="entry name" value="Ribo_uL30_ferredoxin-like_sf"/>
</dbReference>
<dbReference type="InterPro" id="IPR005996">
    <property type="entry name" value="Ribosomal_uL30_bac-type"/>
</dbReference>
<dbReference type="InterPro" id="IPR018038">
    <property type="entry name" value="Ribosomal_uL30_CS"/>
</dbReference>
<dbReference type="InterPro" id="IPR016082">
    <property type="entry name" value="Ribosomal_uL30_ferredoxin-like"/>
</dbReference>
<dbReference type="NCBIfam" id="TIGR01308">
    <property type="entry name" value="rpmD_bact"/>
    <property type="match status" value="1"/>
</dbReference>
<dbReference type="PANTHER" id="PTHR15892:SF2">
    <property type="entry name" value="LARGE RIBOSOMAL SUBUNIT PROTEIN UL30M"/>
    <property type="match status" value="1"/>
</dbReference>
<dbReference type="PANTHER" id="PTHR15892">
    <property type="entry name" value="MITOCHONDRIAL RIBOSOMAL PROTEIN L30"/>
    <property type="match status" value="1"/>
</dbReference>
<dbReference type="Pfam" id="PF00327">
    <property type="entry name" value="Ribosomal_L30"/>
    <property type="match status" value="1"/>
</dbReference>
<dbReference type="PIRSF" id="PIRSF002211">
    <property type="entry name" value="Ribosomal_L30_bac-type"/>
    <property type="match status" value="1"/>
</dbReference>
<dbReference type="SUPFAM" id="SSF55129">
    <property type="entry name" value="Ribosomal protein L30p/L7e"/>
    <property type="match status" value="1"/>
</dbReference>
<dbReference type="PROSITE" id="PS00634">
    <property type="entry name" value="RIBOSOMAL_L30"/>
    <property type="match status" value="1"/>
</dbReference>
<gene>
    <name evidence="1" type="primary">rpmD</name>
    <name type="ordered locus">stu1916</name>
</gene>
<proteinExistence type="inferred from homology"/>
<sequence>MAQIKITLSKSPIGRKPEQRKTVAALGLGKLNSSVVKEDNAAIRGMVNAVSHLVTVEDVK</sequence>
<evidence type="ECO:0000255" key="1">
    <source>
        <dbReference type="HAMAP-Rule" id="MF_01371"/>
    </source>
</evidence>
<evidence type="ECO:0000305" key="2"/>
<keyword id="KW-1185">Reference proteome</keyword>
<keyword id="KW-0687">Ribonucleoprotein</keyword>
<keyword id="KW-0689">Ribosomal protein</keyword>
<name>RL30_STRT2</name>
<organism>
    <name type="scientific">Streptococcus thermophilus (strain ATCC BAA-250 / LMG 18311)</name>
    <dbReference type="NCBI Taxonomy" id="264199"/>
    <lineage>
        <taxon>Bacteria</taxon>
        <taxon>Bacillati</taxon>
        <taxon>Bacillota</taxon>
        <taxon>Bacilli</taxon>
        <taxon>Lactobacillales</taxon>
        <taxon>Streptococcaceae</taxon>
        <taxon>Streptococcus</taxon>
    </lineage>
</organism>
<feature type="chain" id="PRO_0000273877" description="Large ribosomal subunit protein uL30">
    <location>
        <begin position="1"/>
        <end position="60"/>
    </location>
</feature>